<protein>
    <recommendedName>
        <fullName>Hemerythrin</fullName>
    </recommendedName>
</protein>
<keyword id="KW-0408">Iron</keyword>
<keyword id="KW-0479">Metal-binding</keyword>
<keyword id="KW-0561">Oxygen transport</keyword>
<keyword id="KW-0813">Transport</keyword>
<sequence length="119" mass="13690">MGFDIPEPFKWDASFEVFYKKLDDEHKAIFDSIFAVCNGNNADNLKKMVDVTANHFSDEEGMMKSANYADFDSHKKKHEDFLVVIRGLSAPVGDDKLHYAKDWLVNHIKGIDFQYKGKL</sequence>
<reference key="1">
    <citation type="submission" date="2003-06" db="EMBL/GenBank/DDBJ databases">
        <authorList>
            <person name="Choi J.-W."/>
            <person name="Joo H.-S."/>
            <person name="Chang C.-S."/>
        </authorList>
    </citation>
    <scope>NUCLEOTIDE SEQUENCE [MRNA]</scope>
    <source>
        <strain>Isolate Paik1977</strain>
    </source>
</reference>
<organism>
    <name type="scientific">Paraleonnates uschakovi</name>
    <name type="common">Giant mud worm</name>
    <name type="synonym">Periserrula leucophryna</name>
    <dbReference type="NCBI Taxonomy" id="232278"/>
    <lineage>
        <taxon>Eukaryota</taxon>
        <taxon>Metazoa</taxon>
        <taxon>Spiralia</taxon>
        <taxon>Lophotrochozoa</taxon>
        <taxon>Annelida</taxon>
        <taxon>Polychaeta</taxon>
        <taxon>Errantia</taxon>
        <taxon>Phyllodocida</taxon>
        <taxon>Nereididae</taxon>
        <taxon>Periserrula</taxon>
    </lineage>
</organism>
<accession>Q6W3Z9</accession>
<comment type="function">
    <text evidence="1">Hemerythrin is a respiratory protein in blood cells of certain marine worms. The oxygen-binding site in each chain contains two iron atoms (By similarity).</text>
</comment>
<comment type="similarity">
    <text evidence="3">Belongs to the hemerythrin family.</text>
</comment>
<dbReference type="EMBL" id="AY312845">
    <property type="protein sequence ID" value="AAQ63634.1"/>
    <property type="molecule type" value="mRNA"/>
</dbReference>
<dbReference type="SMR" id="Q6W3Z9"/>
<dbReference type="GO" id="GO:0005506">
    <property type="term" value="F:iron ion binding"/>
    <property type="evidence" value="ECO:0007669"/>
    <property type="project" value="InterPro"/>
</dbReference>
<dbReference type="GO" id="GO:0005344">
    <property type="term" value="F:oxygen carrier activity"/>
    <property type="evidence" value="ECO:0007669"/>
    <property type="project" value="UniProtKB-KW"/>
</dbReference>
<dbReference type="CDD" id="cd12107">
    <property type="entry name" value="Hemerythrin"/>
    <property type="match status" value="1"/>
</dbReference>
<dbReference type="Gene3D" id="1.20.120.50">
    <property type="entry name" value="Hemerythrin-like"/>
    <property type="match status" value="1"/>
</dbReference>
<dbReference type="InterPro" id="IPR002063">
    <property type="entry name" value="Haemerythrin"/>
</dbReference>
<dbReference type="InterPro" id="IPR016131">
    <property type="entry name" value="Haemerythrin_Fe_BS"/>
</dbReference>
<dbReference type="InterPro" id="IPR050669">
    <property type="entry name" value="Hemerythrin"/>
</dbReference>
<dbReference type="InterPro" id="IPR012312">
    <property type="entry name" value="Hemerythrin-like"/>
</dbReference>
<dbReference type="InterPro" id="IPR035938">
    <property type="entry name" value="Hemerythrin-like_sf"/>
</dbReference>
<dbReference type="InterPro" id="IPR012827">
    <property type="entry name" value="Hemerythrin_metal-bd"/>
</dbReference>
<dbReference type="NCBIfam" id="TIGR02481">
    <property type="entry name" value="hemeryth_dom"/>
    <property type="match status" value="1"/>
</dbReference>
<dbReference type="NCBIfam" id="TIGR00058">
    <property type="entry name" value="Hemerythrin"/>
    <property type="match status" value="1"/>
</dbReference>
<dbReference type="PANTHER" id="PTHR37164">
    <property type="entry name" value="BACTERIOHEMERYTHRIN"/>
    <property type="match status" value="1"/>
</dbReference>
<dbReference type="PANTHER" id="PTHR37164:SF1">
    <property type="entry name" value="BACTERIOHEMERYTHRIN"/>
    <property type="match status" value="1"/>
</dbReference>
<dbReference type="Pfam" id="PF01814">
    <property type="entry name" value="Hemerythrin"/>
    <property type="match status" value="1"/>
</dbReference>
<dbReference type="PIRSF" id="PIRSF002033">
    <property type="entry name" value="Hemerythrin"/>
    <property type="match status" value="1"/>
</dbReference>
<dbReference type="PRINTS" id="PR00186">
    <property type="entry name" value="HEMERYTHRIN"/>
</dbReference>
<dbReference type="SUPFAM" id="SSF47188">
    <property type="entry name" value="Hemerythrin-like"/>
    <property type="match status" value="1"/>
</dbReference>
<dbReference type="PROSITE" id="PS00550">
    <property type="entry name" value="HEMERYTHRINS"/>
    <property type="match status" value="1"/>
</dbReference>
<feature type="chain" id="PRO_0000343446" description="Hemerythrin">
    <location>
        <begin position="1"/>
        <end position="119"/>
    </location>
</feature>
<feature type="binding site" evidence="2">
    <location>
        <position position="26"/>
    </location>
    <ligand>
        <name>Fe cation</name>
        <dbReference type="ChEBI" id="CHEBI:24875"/>
        <label>1</label>
    </ligand>
</feature>
<feature type="binding site" evidence="2">
    <location>
        <position position="55"/>
    </location>
    <ligand>
        <name>Fe cation</name>
        <dbReference type="ChEBI" id="CHEBI:24875"/>
        <label>1</label>
    </ligand>
</feature>
<feature type="binding site" evidence="2">
    <location>
        <position position="59"/>
    </location>
    <ligand>
        <name>Fe cation</name>
        <dbReference type="ChEBI" id="CHEBI:24875"/>
        <label>1</label>
    </ligand>
</feature>
<feature type="binding site" evidence="2">
    <location>
        <position position="59"/>
    </location>
    <ligand>
        <name>Fe cation</name>
        <dbReference type="ChEBI" id="CHEBI:24875"/>
        <label>2</label>
    </ligand>
</feature>
<feature type="binding site" evidence="2">
    <location>
        <position position="74"/>
    </location>
    <ligand>
        <name>Fe cation</name>
        <dbReference type="ChEBI" id="CHEBI:24875"/>
        <label>2</label>
    </ligand>
</feature>
<feature type="binding site" evidence="2">
    <location>
        <position position="78"/>
    </location>
    <ligand>
        <name>Fe cation</name>
        <dbReference type="ChEBI" id="CHEBI:24875"/>
        <label>2</label>
    </ligand>
</feature>
<feature type="binding site" evidence="2">
    <location>
        <position position="107"/>
    </location>
    <ligand>
        <name>Fe cation</name>
        <dbReference type="ChEBI" id="CHEBI:24875"/>
        <label>2</label>
    </ligand>
</feature>
<feature type="binding site" evidence="2">
    <location>
        <position position="112"/>
    </location>
    <ligand>
        <name>Fe cation</name>
        <dbReference type="ChEBI" id="CHEBI:24875"/>
        <label>1</label>
    </ligand>
</feature>
<feature type="binding site" evidence="2">
    <location>
        <position position="112"/>
    </location>
    <ligand>
        <name>Fe cation</name>
        <dbReference type="ChEBI" id="CHEBI:24875"/>
        <label>2</label>
    </ligand>
</feature>
<name>HEMT_PARUS</name>
<proteinExistence type="inferred from homology"/>
<evidence type="ECO:0000250" key="1"/>
<evidence type="ECO:0000250" key="2">
    <source>
        <dbReference type="UniProtKB" id="P02244"/>
    </source>
</evidence>
<evidence type="ECO:0000305" key="3"/>